<keyword id="KW-0687">Ribonucleoprotein</keyword>
<keyword id="KW-0689">Ribosomal protein</keyword>
<keyword id="KW-0694">RNA-binding</keyword>
<keyword id="KW-0699">rRNA-binding</keyword>
<evidence type="ECO:0000255" key="1">
    <source>
        <dbReference type="HAMAP-Rule" id="MF_01306"/>
    </source>
</evidence>
<evidence type="ECO:0000256" key="2">
    <source>
        <dbReference type="SAM" id="MobiDB-lite"/>
    </source>
</evidence>
<evidence type="ECO:0000305" key="3"/>
<comment type="function">
    <text evidence="1">One of the primary rRNA binding proteins, it binds directly to 16S rRNA where it nucleates assembly of the body of the 30S subunit.</text>
</comment>
<comment type="function">
    <text evidence="1">With S5 and S12 plays an important role in translational accuracy.</text>
</comment>
<comment type="subunit">
    <text evidence="1">Part of the 30S ribosomal subunit. Contacts protein S5. The interaction surface between S4 and S5 is involved in control of translational fidelity.</text>
</comment>
<comment type="similarity">
    <text evidence="1">Belongs to the universal ribosomal protein uS4 family.</text>
</comment>
<reference key="1">
    <citation type="journal article" date="2007" name="PLoS Genet.">
        <title>Patterns and implications of gene gain and loss in the evolution of Prochlorococcus.</title>
        <authorList>
            <person name="Kettler G.C."/>
            <person name="Martiny A.C."/>
            <person name="Huang K."/>
            <person name="Zucker J."/>
            <person name="Coleman M.L."/>
            <person name="Rodrigue S."/>
            <person name="Chen F."/>
            <person name="Lapidus A."/>
            <person name="Ferriera S."/>
            <person name="Johnson J."/>
            <person name="Steglich C."/>
            <person name="Church G.M."/>
            <person name="Richardson P."/>
            <person name="Chisholm S.W."/>
        </authorList>
    </citation>
    <scope>NUCLEOTIDE SEQUENCE [LARGE SCALE GENOMIC DNA]</scope>
    <source>
        <strain>MIT 9303</strain>
    </source>
</reference>
<accession>A2CBJ1</accession>
<dbReference type="EMBL" id="CP000554">
    <property type="protein sequence ID" value="ABM78851.1"/>
    <property type="molecule type" value="Genomic_DNA"/>
</dbReference>
<dbReference type="RefSeq" id="WP_011129606.1">
    <property type="nucleotide sequence ID" value="NC_008820.1"/>
</dbReference>
<dbReference type="SMR" id="A2CBJ1"/>
<dbReference type="STRING" id="59922.P9303_21161"/>
<dbReference type="KEGG" id="pmf:P9303_21161"/>
<dbReference type="HOGENOM" id="CLU_092403_0_5_3"/>
<dbReference type="BioCyc" id="PMAR59922:G1G80-1848-MONOMER"/>
<dbReference type="Proteomes" id="UP000002274">
    <property type="component" value="Chromosome"/>
</dbReference>
<dbReference type="GO" id="GO:0015935">
    <property type="term" value="C:small ribosomal subunit"/>
    <property type="evidence" value="ECO:0007669"/>
    <property type="project" value="InterPro"/>
</dbReference>
<dbReference type="GO" id="GO:0019843">
    <property type="term" value="F:rRNA binding"/>
    <property type="evidence" value="ECO:0007669"/>
    <property type="project" value="UniProtKB-UniRule"/>
</dbReference>
<dbReference type="GO" id="GO:0003735">
    <property type="term" value="F:structural constituent of ribosome"/>
    <property type="evidence" value="ECO:0007669"/>
    <property type="project" value="InterPro"/>
</dbReference>
<dbReference type="GO" id="GO:0042274">
    <property type="term" value="P:ribosomal small subunit biogenesis"/>
    <property type="evidence" value="ECO:0007669"/>
    <property type="project" value="TreeGrafter"/>
</dbReference>
<dbReference type="GO" id="GO:0006412">
    <property type="term" value="P:translation"/>
    <property type="evidence" value="ECO:0007669"/>
    <property type="project" value="UniProtKB-UniRule"/>
</dbReference>
<dbReference type="CDD" id="cd00165">
    <property type="entry name" value="S4"/>
    <property type="match status" value="1"/>
</dbReference>
<dbReference type="FunFam" id="3.10.290.10:FF:000001">
    <property type="entry name" value="30S ribosomal protein S4"/>
    <property type="match status" value="1"/>
</dbReference>
<dbReference type="FunFam" id="1.10.1050.10:FF:000002">
    <property type="entry name" value="30S ribosomal protein S4, chloroplastic"/>
    <property type="match status" value="1"/>
</dbReference>
<dbReference type="Gene3D" id="1.10.1050.10">
    <property type="entry name" value="Ribosomal Protein S4 Delta 41, Chain A, domain 1"/>
    <property type="match status" value="1"/>
</dbReference>
<dbReference type="Gene3D" id="3.10.290.10">
    <property type="entry name" value="RNA-binding S4 domain"/>
    <property type="match status" value="1"/>
</dbReference>
<dbReference type="HAMAP" id="MF_01306_B">
    <property type="entry name" value="Ribosomal_uS4_B"/>
    <property type="match status" value="1"/>
</dbReference>
<dbReference type="InterPro" id="IPR022801">
    <property type="entry name" value="Ribosomal_uS4"/>
</dbReference>
<dbReference type="InterPro" id="IPR005709">
    <property type="entry name" value="Ribosomal_uS4_bac-type"/>
</dbReference>
<dbReference type="InterPro" id="IPR018079">
    <property type="entry name" value="Ribosomal_uS4_CS"/>
</dbReference>
<dbReference type="InterPro" id="IPR001912">
    <property type="entry name" value="Ribosomal_uS4_N"/>
</dbReference>
<dbReference type="InterPro" id="IPR002942">
    <property type="entry name" value="S4_RNA-bd"/>
</dbReference>
<dbReference type="InterPro" id="IPR036986">
    <property type="entry name" value="S4_RNA-bd_sf"/>
</dbReference>
<dbReference type="NCBIfam" id="NF003717">
    <property type="entry name" value="PRK05327.1"/>
    <property type="match status" value="1"/>
</dbReference>
<dbReference type="NCBIfam" id="TIGR01017">
    <property type="entry name" value="rpsD_bact"/>
    <property type="match status" value="1"/>
</dbReference>
<dbReference type="PANTHER" id="PTHR11831">
    <property type="entry name" value="30S 40S RIBOSOMAL PROTEIN"/>
    <property type="match status" value="1"/>
</dbReference>
<dbReference type="PANTHER" id="PTHR11831:SF4">
    <property type="entry name" value="SMALL RIBOSOMAL SUBUNIT PROTEIN US4M"/>
    <property type="match status" value="1"/>
</dbReference>
<dbReference type="Pfam" id="PF00163">
    <property type="entry name" value="Ribosomal_S4"/>
    <property type="match status" value="1"/>
</dbReference>
<dbReference type="Pfam" id="PF01479">
    <property type="entry name" value="S4"/>
    <property type="match status" value="1"/>
</dbReference>
<dbReference type="SMART" id="SM01390">
    <property type="entry name" value="Ribosomal_S4"/>
    <property type="match status" value="1"/>
</dbReference>
<dbReference type="SMART" id="SM00363">
    <property type="entry name" value="S4"/>
    <property type="match status" value="1"/>
</dbReference>
<dbReference type="SUPFAM" id="SSF55174">
    <property type="entry name" value="Alpha-L RNA-binding motif"/>
    <property type="match status" value="1"/>
</dbReference>
<dbReference type="PROSITE" id="PS00632">
    <property type="entry name" value="RIBOSOMAL_S4"/>
    <property type="match status" value="1"/>
</dbReference>
<dbReference type="PROSITE" id="PS50889">
    <property type="entry name" value="S4"/>
    <property type="match status" value="1"/>
</dbReference>
<name>RS4_PROM3</name>
<protein>
    <recommendedName>
        <fullName evidence="1">Small ribosomal subunit protein uS4</fullName>
    </recommendedName>
    <alternativeName>
        <fullName evidence="3">30S ribosomal protein S4</fullName>
    </alternativeName>
</protein>
<feature type="chain" id="PRO_0000293337" description="Small ribosomal subunit protein uS4">
    <location>
        <begin position="1"/>
        <end position="202"/>
    </location>
</feature>
<feature type="domain" description="S4 RNA-binding" evidence="1">
    <location>
        <begin position="90"/>
        <end position="152"/>
    </location>
</feature>
<feature type="region of interest" description="Disordered" evidence="2">
    <location>
        <begin position="1"/>
        <end position="43"/>
    </location>
</feature>
<feature type="compositionally biased region" description="Basic residues" evidence="2">
    <location>
        <begin position="1"/>
        <end position="13"/>
    </location>
</feature>
<organism>
    <name type="scientific">Prochlorococcus marinus (strain MIT 9303)</name>
    <dbReference type="NCBI Taxonomy" id="59922"/>
    <lineage>
        <taxon>Bacteria</taxon>
        <taxon>Bacillati</taxon>
        <taxon>Cyanobacteriota</taxon>
        <taxon>Cyanophyceae</taxon>
        <taxon>Synechococcales</taxon>
        <taxon>Prochlorococcaceae</taxon>
        <taxon>Prochlorococcus</taxon>
    </lineage>
</organism>
<gene>
    <name evidence="1" type="primary">rpsD</name>
    <name evidence="1" type="synonym">rps4</name>
    <name type="ordered locus">P9303_21161</name>
</gene>
<sequence length="202" mass="22939">MSRYRGPRLRITRRLGDLPGLTRKAAKRSHPPGQHGQARRKRSEYAIRLEEKQKLRFNYGISERQLVRYVKKARAQDGSTGTNLLKLLENRLDNVCFRLGFGPTVPGARQLVNHGHVTVNGRVLDIASYQCKAGDVVAIRERKGSKKLAEANLEFPGLANVPPHIELDKAKMSAKIISKCEREWVALEINELLVVEYYSRKV</sequence>
<proteinExistence type="inferred from homology"/>